<keyword id="KW-0030">Aminoacyl-tRNA synthetase</keyword>
<keyword id="KW-0067">ATP-binding</keyword>
<keyword id="KW-0963">Cytoplasm</keyword>
<keyword id="KW-0436">Ligase</keyword>
<keyword id="KW-0547">Nucleotide-binding</keyword>
<keyword id="KW-0648">Protein biosynthesis</keyword>
<keyword id="KW-0694">RNA-binding</keyword>
<protein>
    <recommendedName>
        <fullName evidence="1">Tyrosine--tRNA ligase</fullName>
        <ecNumber evidence="1">6.1.1.1</ecNumber>
    </recommendedName>
    <alternativeName>
        <fullName evidence="1">Tyrosyl-tRNA synthetase</fullName>
        <shortName evidence="1">TyrRS</shortName>
    </alternativeName>
</protein>
<gene>
    <name evidence="1" type="primary">tyrS</name>
    <name type="ordered locus">CPS_4727</name>
</gene>
<proteinExistence type="inferred from homology"/>
<name>SYY_COLP3</name>
<sequence>MTDFNQAFAELKRGAEEILVEEELLTKLKTGKPLKIKAGFDPTAPDLHLGHTVLINKLRQFQQLGHEVIFLIGDFTGMIGDPTGKNVTRKALTKEDVLANAETYKEQVFKILDPAKTTVAFNSTWMDKLGAAGMLQLASRQTVARMMERDDFKKRYANGQAIAIHEFMYPLVQGWDSVALEADVELGGTDQKFNLLMGRELQKSEGQRPQTVLMMPLLEGLDGVQKMSKSLGNYIGITDTPTDMFGKIMSISDVLMWRYYELLSFKPLEEIEGYKTEIENGKNPRDVKIDLAKELIARFHDEAAAQAAHDEFINRFQKGALPDDMPELTITTENGEIAIANLLKDAGLVGSTSDAFRMIKQGAAKIDSEKVTDRSLVISAGTTAVYQVGKRKFARITVS</sequence>
<reference key="1">
    <citation type="journal article" date="2005" name="Proc. Natl. Acad. Sci. U.S.A.">
        <title>The psychrophilic lifestyle as revealed by the genome sequence of Colwellia psychrerythraea 34H through genomic and proteomic analyses.</title>
        <authorList>
            <person name="Methe B.A."/>
            <person name="Nelson K.E."/>
            <person name="Deming J.W."/>
            <person name="Momen B."/>
            <person name="Melamud E."/>
            <person name="Zhang X."/>
            <person name="Moult J."/>
            <person name="Madupu R."/>
            <person name="Nelson W.C."/>
            <person name="Dodson R.J."/>
            <person name="Brinkac L.M."/>
            <person name="Daugherty S.C."/>
            <person name="Durkin A.S."/>
            <person name="DeBoy R.T."/>
            <person name="Kolonay J.F."/>
            <person name="Sullivan S.A."/>
            <person name="Zhou L."/>
            <person name="Davidsen T.M."/>
            <person name="Wu M."/>
            <person name="Huston A.L."/>
            <person name="Lewis M."/>
            <person name="Weaver B."/>
            <person name="Weidman J.F."/>
            <person name="Khouri H."/>
            <person name="Utterback T.R."/>
            <person name="Feldblyum T.V."/>
            <person name="Fraser C.M."/>
        </authorList>
    </citation>
    <scope>NUCLEOTIDE SEQUENCE [LARGE SCALE GENOMIC DNA]</scope>
    <source>
        <strain>34H / ATCC BAA-681</strain>
    </source>
</reference>
<accession>Q47V01</accession>
<comment type="function">
    <text evidence="1">Catalyzes the attachment of tyrosine to tRNA(Tyr) in a two-step reaction: tyrosine is first activated by ATP to form Tyr-AMP and then transferred to the acceptor end of tRNA(Tyr).</text>
</comment>
<comment type="catalytic activity">
    <reaction evidence="1">
        <text>tRNA(Tyr) + L-tyrosine + ATP = L-tyrosyl-tRNA(Tyr) + AMP + diphosphate + H(+)</text>
        <dbReference type="Rhea" id="RHEA:10220"/>
        <dbReference type="Rhea" id="RHEA-COMP:9706"/>
        <dbReference type="Rhea" id="RHEA-COMP:9707"/>
        <dbReference type="ChEBI" id="CHEBI:15378"/>
        <dbReference type="ChEBI" id="CHEBI:30616"/>
        <dbReference type="ChEBI" id="CHEBI:33019"/>
        <dbReference type="ChEBI" id="CHEBI:58315"/>
        <dbReference type="ChEBI" id="CHEBI:78442"/>
        <dbReference type="ChEBI" id="CHEBI:78536"/>
        <dbReference type="ChEBI" id="CHEBI:456215"/>
        <dbReference type="EC" id="6.1.1.1"/>
    </reaction>
</comment>
<comment type="subunit">
    <text evidence="1">Homodimer.</text>
</comment>
<comment type="subcellular location">
    <subcellularLocation>
        <location evidence="1">Cytoplasm</location>
    </subcellularLocation>
</comment>
<comment type="similarity">
    <text evidence="1">Belongs to the class-I aminoacyl-tRNA synthetase family. TyrS type 2 subfamily.</text>
</comment>
<organism>
    <name type="scientific">Colwellia psychrerythraea (strain 34H / ATCC BAA-681)</name>
    <name type="common">Vibrio psychroerythus</name>
    <dbReference type="NCBI Taxonomy" id="167879"/>
    <lineage>
        <taxon>Bacteria</taxon>
        <taxon>Pseudomonadati</taxon>
        <taxon>Pseudomonadota</taxon>
        <taxon>Gammaproteobacteria</taxon>
        <taxon>Alteromonadales</taxon>
        <taxon>Colwelliaceae</taxon>
        <taxon>Colwellia</taxon>
    </lineage>
</organism>
<feature type="chain" id="PRO_0000236711" description="Tyrosine--tRNA ligase">
    <location>
        <begin position="1"/>
        <end position="399"/>
    </location>
</feature>
<feature type="domain" description="S4 RNA-binding" evidence="1">
    <location>
        <begin position="337"/>
        <end position="398"/>
    </location>
</feature>
<feature type="short sequence motif" description="'HIGH' region">
    <location>
        <begin position="42"/>
        <end position="51"/>
    </location>
</feature>
<feature type="short sequence motif" description="'KMSKS' region">
    <location>
        <begin position="226"/>
        <end position="230"/>
    </location>
</feature>
<feature type="binding site" evidence="1">
    <location>
        <position position="229"/>
    </location>
    <ligand>
        <name>ATP</name>
        <dbReference type="ChEBI" id="CHEBI:30616"/>
    </ligand>
</feature>
<dbReference type="EC" id="6.1.1.1" evidence="1"/>
<dbReference type="EMBL" id="CP000083">
    <property type="protein sequence ID" value="AAZ24461.1"/>
    <property type="molecule type" value="Genomic_DNA"/>
</dbReference>
<dbReference type="RefSeq" id="WP_011045452.1">
    <property type="nucleotide sequence ID" value="NC_003910.7"/>
</dbReference>
<dbReference type="SMR" id="Q47V01"/>
<dbReference type="STRING" id="167879.CPS_4727"/>
<dbReference type="KEGG" id="cps:CPS_4727"/>
<dbReference type="eggNOG" id="COG0162">
    <property type="taxonomic scope" value="Bacteria"/>
</dbReference>
<dbReference type="HOGENOM" id="CLU_024003_5_0_6"/>
<dbReference type="Proteomes" id="UP000000547">
    <property type="component" value="Chromosome"/>
</dbReference>
<dbReference type="GO" id="GO:0005829">
    <property type="term" value="C:cytosol"/>
    <property type="evidence" value="ECO:0007669"/>
    <property type="project" value="TreeGrafter"/>
</dbReference>
<dbReference type="GO" id="GO:0005524">
    <property type="term" value="F:ATP binding"/>
    <property type="evidence" value="ECO:0007669"/>
    <property type="project" value="UniProtKB-UniRule"/>
</dbReference>
<dbReference type="GO" id="GO:0003723">
    <property type="term" value="F:RNA binding"/>
    <property type="evidence" value="ECO:0007669"/>
    <property type="project" value="UniProtKB-KW"/>
</dbReference>
<dbReference type="GO" id="GO:0004831">
    <property type="term" value="F:tyrosine-tRNA ligase activity"/>
    <property type="evidence" value="ECO:0007669"/>
    <property type="project" value="UniProtKB-UniRule"/>
</dbReference>
<dbReference type="GO" id="GO:0006437">
    <property type="term" value="P:tyrosyl-tRNA aminoacylation"/>
    <property type="evidence" value="ECO:0007669"/>
    <property type="project" value="UniProtKB-UniRule"/>
</dbReference>
<dbReference type="CDD" id="cd00165">
    <property type="entry name" value="S4"/>
    <property type="match status" value="1"/>
</dbReference>
<dbReference type="CDD" id="cd00805">
    <property type="entry name" value="TyrRS_core"/>
    <property type="match status" value="1"/>
</dbReference>
<dbReference type="FunFam" id="1.10.240.10:FF:000006">
    <property type="entry name" value="Tyrosine--tRNA ligase"/>
    <property type="match status" value="1"/>
</dbReference>
<dbReference type="FunFam" id="3.10.290.10:FF:000022">
    <property type="entry name" value="Tyrosine--tRNA ligase"/>
    <property type="match status" value="1"/>
</dbReference>
<dbReference type="FunFam" id="3.40.50.620:FF:000061">
    <property type="entry name" value="Tyrosine--tRNA ligase"/>
    <property type="match status" value="1"/>
</dbReference>
<dbReference type="Gene3D" id="3.40.50.620">
    <property type="entry name" value="HUPs"/>
    <property type="match status" value="1"/>
</dbReference>
<dbReference type="Gene3D" id="3.10.290.10">
    <property type="entry name" value="RNA-binding S4 domain"/>
    <property type="match status" value="1"/>
</dbReference>
<dbReference type="Gene3D" id="1.10.240.10">
    <property type="entry name" value="Tyrosyl-Transfer RNA Synthetase"/>
    <property type="match status" value="1"/>
</dbReference>
<dbReference type="HAMAP" id="MF_02007">
    <property type="entry name" value="Tyr_tRNA_synth_type2"/>
    <property type="match status" value="1"/>
</dbReference>
<dbReference type="InterPro" id="IPR001412">
    <property type="entry name" value="aa-tRNA-synth_I_CS"/>
</dbReference>
<dbReference type="InterPro" id="IPR002305">
    <property type="entry name" value="aa-tRNA-synth_Ic"/>
</dbReference>
<dbReference type="InterPro" id="IPR014729">
    <property type="entry name" value="Rossmann-like_a/b/a_fold"/>
</dbReference>
<dbReference type="InterPro" id="IPR036986">
    <property type="entry name" value="S4_RNA-bd_sf"/>
</dbReference>
<dbReference type="InterPro" id="IPR002307">
    <property type="entry name" value="Tyr-tRNA-ligase"/>
</dbReference>
<dbReference type="InterPro" id="IPR024088">
    <property type="entry name" value="Tyr-tRNA-ligase_bac-type"/>
</dbReference>
<dbReference type="InterPro" id="IPR024108">
    <property type="entry name" value="Tyr-tRNA-ligase_bac_2"/>
</dbReference>
<dbReference type="NCBIfam" id="TIGR00234">
    <property type="entry name" value="tyrS"/>
    <property type="match status" value="1"/>
</dbReference>
<dbReference type="PANTHER" id="PTHR11766:SF1">
    <property type="entry name" value="TYROSINE--TRNA LIGASE"/>
    <property type="match status" value="1"/>
</dbReference>
<dbReference type="PANTHER" id="PTHR11766">
    <property type="entry name" value="TYROSYL-TRNA SYNTHETASE"/>
    <property type="match status" value="1"/>
</dbReference>
<dbReference type="Pfam" id="PF00579">
    <property type="entry name" value="tRNA-synt_1b"/>
    <property type="match status" value="1"/>
</dbReference>
<dbReference type="PRINTS" id="PR01040">
    <property type="entry name" value="TRNASYNTHTYR"/>
</dbReference>
<dbReference type="SUPFAM" id="SSF55174">
    <property type="entry name" value="Alpha-L RNA-binding motif"/>
    <property type="match status" value="1"/>
</dbReference>
<dbReference type="SUPFAM" id="SSF52374">
    <property type="entry name" value="Nucleotidylyl transferase"/>
    <property type="match status" value="1"/>
</dbReference>
<dbReference type="PROSITE" id="PS00178">
    <property type="entry name" value="AA_TRNA_LIGASE_I"/>
    <property type="match status" value="1"/>
</dbReference>
<dbReference type="PROSITE" id="PS50889">
    <property type="entry name" value="S4"/>
    <property type="match status" value="1"/>
</dbReference>
<evidence type="ECO:0000255" key="1">
    <source>
        <dbReference type="HAMAP-Rule" id="MF_02007"/>
    </source>
</evidence>